<proteinExistence type="inferred from homology"/>
<feature type="chain" id="PRO_0000250003" description="Anhydro-N-acetylmuramic acid kinase">
    <location>
        <begin position="1"/>
        <end position="361"/>
    </location>
</feature>
<feature type="binding site" evidence="1">
    <location>
        <begin position="10"/>
        <end position="17"/>
    </location>
    <ligand>
        <name>ATP</name>
        <dbReference type="ChEBI" id="CHEBI:30616"/>
    </ligand>
</feature>
<dbReference type="EC" id="2.7.1.170" evidence="1"/>
<dbReference type="EMBL" id="CP000009">
    <property type="protein sequence ID" value="AAW60649.1"/>
    <property type="molecule type" value="Genomic_DNA"/>
</dbReference>
<dbReference type="RefSeq" id="WP_011252445.1">
    <property type="nucleotide sequence ID" value="NC_006677.1"/>
</dbReference>
<dbReference type="SMR" id="Q5FSJ7"/>
<dbReference type="STRING" id="290633.GOX0876"/>
<dbReference type="KEGG" id="gox:GOX0876"/>
<dbReference type="eggNOG" id="COG2377">
    <property type="taxonomic scope" value="Bacteria"/>
</dbReference>
<dbReference type="HOGENOM" id="CLU_038782_3_0_5"/>
<dbReference type="UniPathway" id="UPA00343"/>
<dbReference type="UniPathway" id="UPA00544"/>
<dbReference type="Proteomes" id="UP000006375">
    <property type="component" value="Chromosome"/>
</dbReference>
<dbReference type="GO" id="GO:0005524">
    <property type="term" value="F:ATP binding"/>
    <property type="evidence" value="ECO:0007669"/>
    <property type="project" value="UniProtKB-UniRule"/>
</dbReference>
<dbReference type="GO" id="GO:0016301">
    <property type="term" value="F:kinase activity"/>
    <property type="evidence" value="ECO:0007669"/>
    <property type="project" value="UniProtKB-KW"/>
</dbReference>
<dbReference type="GO" id="GO:0016773">
    <property type="term" value="F:phosphotransferase activity, alcohol group as acceptor"/>
    <property type="evidence" value="ECO:0007669"/>
    <property type="project" value="UniProtKB-UniRule"/>
</dbReference>
<dbReference type="GO" id="GO:0097175">
    <property type="term" value="P:1,6-anhydro-N-acetyl-beta-muramic acid catabolic process"/>
    <property type="evidence" value="ECO:0007669"/>
    <property type="project" value="UniProtKB-UniRule"/>
</dbReference>
<dbReference type="GO" id="GO:0006040">
    <property type="term" value="P:amino sugar metabolic process"/>
    <property type="evidence" value="ECO:0007669"/>
    <property type="project" value="InterPro"/>
</dbReference>
<dbReference type="GO" id="GO:0009254">
    <property type="term" value="P:peptidoglycan turnover"/>
    <property type="evidence" value="ECO:0007669"/>
    <property type="project" value="UniProtKB-UniRule"/>
</dbReference>
<dbReference type="Gene3D" id="3.30.420.40">
    <property type="match status" value="2"/>
</dbReference>
<dbReference type="HAMAP" id="MF_01270">
    <property type="entry name" value="AnhMurNAc_kinase"/>
    <property type="match status" value="1"/>
</dbReference>
<dbReference type="InterPro" id="IPR005338">
    <property type="entry name" value="Anhydro_N_Ac-Mur_kinase"/>
</dbReference>
<dbReference type="InterPro" id="IPR043129">
    <property type="entry name" value="ATPase_NBD"/>
</dbReference>
<dbReference type="NCBIfam" id="NF007141">
    <property type="entry name" value="PRK09585.1-5"/>
    <property type="match status" value="1"/>
</dbReference>
<dbReference type="PANTHER" id="PTHR30605">
    <property type="entry name" value="ANHYDRO-N-ACETYLMURAMIC ACID KINASE"/>
    <property type="match status" value="1"/>
</dbReference>
<dbReference type="PANTHER" id="PTHR30605:SF0">
    <property type="entry name" value="ANHYDRO-N-ACETYLMURAMIC ACID KINASE"/>
    <property type="match status" value="1"/>
</dbReference>
<dbReference type="Pfam" id="PF03702">
    <property type="entry name" value="AnmK"/>
    <property type="match status" value="1"/>
</dbReference>
<dbReference type="SUPFAM" id="SSF53067">
    <property type="entry name" value="Actin-like ATPase domain"/>
    <property type="match status" value="1"/>
</dbReference>
<name>ANMK_GLUOX</name>
<organism>
    <name type="scientific">Gluconobacter oxydans (strain 621H)</name>
    <name type="common">Gluconobacter suboxydans</name>
    <dbReference type="NCBI Taxonomy" id="290633"/>
    <lineage>
        <taxon>Bacteria</taxon>
        <taxon>Pseudomonadati</taxon>
        <taxon>Pseudomonadota</taxon>
        <taxon>Alphaproteobacteria</taxon>
        <taxon>Acetobacterales</taxon>
        <taxon>Acetobacteraceae</taxon>
        <taxon>Gluconobacter</taxon>
    </lineage>
</organism>
<evidence type="ECO:0000255" key="1">
    <source>
        <dbReference type="HAMAP-Rule" id="MF_01270"/>
    </source>
</evidence>
<gene>
    <name evidence="1" type="primary">anmK</name>
    <name type="ordered locus">GOX0876</name>
</gene>
<reference key="1">
    <citation type="journal article" date="2005" name="Nat. Biotechnol.">
        <title>Complete genome sequence of the acetic acid bacterium Gluconobacter oxydans.</title>
        <authorList>
            <person name="Prust C."/>
            <person name="Hoffmeister M."/>
            <person name="Liesegang H."/>
            <person name="Wiezer A."/>
            <person name="Fricke W.F."/>
            <person name="Ehrenreich A."/>
            <person name="Gottschalk G."/>
            <person name="Deppenmeier U."/>
        </authorList>
    </citation>
    <scope>NUCLEOTIDE SEQUENCE [LARGE SCALE GENOMIC DNA]</scope>
    <source>
        <strain>621H</strain>
    </source>
</reference>
<sequence>MVWALGLMSGTSLDGVDAALIETDGVRIGRIGPSLTVPYSPELRGRTRELLDRAAGLAPDDAEVLAVTRELTLRHVDAVRLLREKAPGLEPAVIGFHGQTILHQPERGRSWQIGDARLLQDLCGVPVVHDFRSRDLENGGEGAPLVPVFHAALLHQEVRPVAVLNIGGVANVTVLGQQEPNGQRGVWACDTGPGNALLDDWALQHTGQPCDFGGALAASGAVHQDVLERLLAIPYFARPMPKSLDRLSFHPEAMACVRDLSAADGAATLASFTVEAVAGTTFPVRPEGWFVAGGGRHNPVLMDGLNHRLGNVASVDVLGWDGDALEAQCFGLLAMRFLRGLPSSWPGTTGVRQPCIAGRAV</sequence>
<accession>Q5FSJ7</accession>
<comment type="function">
    <text evidence="1">Catalyzes the specific phosphorylation of 1,6-anhydro-N-acetylmuramic acid (anhMurNAc) with the simultaneous cleavage of the 1,6-anhydro ring, generating MurNAc-6-P. Is required for the utilization of anhMurNAc either imported from the medium or derived from its own cell wall murein, and thus plays a role in cell wall recycling.</text>
</comment>
<comment type="catalytic activity">
    <reaction evidence="1">
        <text>1,6-anhydro-N-acetyl-beta-muramate + ATP + H2O = N-acetyl-D-muramate 6-phosphate + ADP + H(+)</text>
        <dbReference type="Rhea" id="RHEA:24952"/>
        <dbReference type="ChEBI" id="CHEBI:15377"/>
        <dbReference type="ChEBI" id="CHEBI:15378"/>
        <dbReference type="ChEBI" id="CHEBI:30616"/>
        <dbReference type="ChEBI" id="CHEBI:58690"/>
        <dbReference type="ChEBI" id="CHEBI:58722"/>
        <dbReference type="ChEBI" id="CHEBI:456216"/>
        <dbReference type="EC" id="2.7.1.170"/>
    </reaction>
</comment>
<comment type="pathway">
    <text evidence="1">Amino-sugar metabolism; 1,6-anhydro-N-acetylmuramate degradation.</text>
</comment>
<comment type="pathway">
    <text evidence="1">Cell wall biogenesis; peptidoglycan recycling.</text>
</comment>
<comment type="similarity">
    <text evidence="1">Belongs to the anhydro-N-acetylmuramic acid kinase family.</text>
</comment>
<protein>
    <recommendedName>
        <fullName evidence="1">Anhydro-N-acetylmuramic acid kinase</fullName>
        <ecNumber evidence="1">2.7.1.170</ecNumber>
    </recommendedName>
    <alternativeName>
        <fullName evidence="1">AnhMurNAc kinase</fullName>
    </alternativeName>
</protein>
<keyword id="KW-0067">ATP-binding</keyword>
<keyword id="KW-0119">Carbohydrate metabolism</keyword>
<keyword id="KW-0418">Kinase</keyword>
<keyword id="KW-0547">Nucleotide-binding</keyword>
<keyword id="KW-1185">Reference proteome</keyword>
<keyword id="KW-0808">Transferase</keyword>